<keyword id="KW-1185">Reference proteome</keyword>
<keyword id="KW-0694">RNA-binding</keyword>
<sequence>MMEADRPEKLFVGGLNLKTDEKALKAEFGKYGHIIKVFLIKDRKTNKSRGFAFVTFESPADAKAAARDMNGKYLDGKAIMVAQTIKPAFESSRWVPPTPGSGSRSRFSHRTRGGGSSPQRPPSQGRPDDGRGYVGYFDLWPYRAPMPRKRGPPPRHCASPPHKRRDPGDFVPALREYSRRYYGHSSVPDYCPXRGDGNRNGYRGRDHDYMDHPSKGSYREPLKSYGGPCGAAPVRGTPPSYGGGCCYEEYQGNSPDACSEGRSSEALPVVLPDAYSRDHLPKAYSGGRSSSSNSYSRSDRYGEEGCYEEYRGRSPDAHSGGRNSSSNSYGQSHHYGGEGRYEEYRGRYEEYRGRSHEARSGGRSTDAHSGGRSDNAYSGGHDSSSWSDCCGGGGRYEEYQGRSLDANSGGRSPEAYSGGHDNSSWSDRYGVGGHYEENRGHSLDANSGGRSPDTHSGGRSSSSNSYGQSHRYGGEGHYEYRGRSHDAHSGGCSADAYSGGHDSSSRSHRYRGGGRYVEYRGRSLDANSGGCWPDAYSGGHDSSSQSYRYRGGGCYEEYRGRSLDANSGGRSPNAYSGGHDSSSRSHRYGGGGCYEEYRGRSLDANSGGRWPDAYSGGHDSSSQSNRYGGGGCYEEYRGRSLDANSGGCSPNAYSGGHDSSSQSHRYGGGGRSLDANSGGRSPDAYSGGHDSSSQSNRYGGGSRYEEYRGRSLDANSSGRLPDAYSGGHDSSSWSHRYGGGGRYEEYRGRSLDANSGGRSPNAYSGGRDSSSNSYDRSHRYGGGGHYEEYRGRSHDTHSRGQSPDAHSGDRSTEAYSRGRNSFSNSYGQSDHYGRGGRYEEYQGRSPDAYGGGRGLNSSNNSHGRSHRYGGGGRYEEYRGPSPDAHSGGHDSSIKSYGLSDRYGGGGHYEEYQGSLPDAYSGDHDRSSNSYGRSDRYSRGRDRVGRPDRGLPLPMETGSPPLHDSYSRSGCRVPRGGGRQGGRFERGEGQSRY</sequence>
<protein>
    <recommendedName>
        <fullName>RNA-binding motif protein, X-linked-like-3</fullName>
    </recommendedName>
</protein>
<organism>
    <name type="scientific">Pan troglodytes</name>
    <name type="common">Chimpanzee</name>
    <dbReference type="NCBI Taxonomy" id="9598"/>
    <lineage>
        <taxon>Eukaryota</taxon>
        <taxon>Metazoa</taxon>
        <taxon>Chordata</taxon>
        <taxon>Craniata</taxon>
        <taxon>Vertebrata</taxon>
        <taxon>Euteleostomi</taxon>
        <taxon>Mammalia</taxon>
        <taxon>Eutheria</taxon>
        <taxon>Euarchontoglires</taxon>
        <taxon>Primates</taxon>
        <taxon>Haplorrhini</taxon>
        <taxon>Catarrhini</taxon>
        <taxon>Hominidae</taxon>
        <taxon>Pan</taxon>
    </lineage>
</organism>
<evidence type="ECO:0000255" key="1">
    <source>
        <dbReference type="PROSITE-ProRule" id="PRU00176"/>
    </source>
</evidence>
<evidence type="ECO:0000256" key="2">
    <source>
        <dbReference type="SAM" id="MobiDB-lite"/>
    </source>
</evidence>
<feature type="chain" id="PRO_0000367591" description="RNA-binding motif protein, X-linked-like-3">
    <location>
        <begin position="1"/>
        <end position="992"/>
    </location>
</feature>
<feature type="domain" description="RRM" evidence="1">
    <location>
        <begin position="8"/>
        <end position="86"/>
    </location>
</feature>
<feature type="region of interest" description="Disordered" evidence="2">
    <location>
        <begin position="91"/>
        <end position="130"/>
    </location>
</feature>
<feature type="region of interest" description="Disordered" evidence="2">
    <location>
        <begin position="144"/>
        <end position="169"/>
    </location>
</feature>
<feature type="region of interest" description="Disordered" evidence="2">
    <location>
        <begin position="188"/>
        <end position="207"/>
    </location>
</feature>
<feature type="region of interest" description="Disordered" evidence="2">
    <location>
        <begin position="278"/>
        <end position="385"/>
    </location>
</feature>
<feature type="region of interest" description="Disordered" evidence="2">
    <location>
        <begin position="397"/>
        <end position="511"/>
    </location>
</feature>
<feature type="region of interest" description="Disordered" evidence="2">
    <location>
        <begin position="562"/>
        <end position="588"/>
    </location>
</feature>
<feature type="region of interest" description="Disordered" evidence="2">
    <location>
        <begin position="644"/>
        <end position="992"/>
    </location>
</feature>
<feature type="compositionally biased region" description="Low complexity" evidence="2">
    <location>
        <begin position="284"/>
        <end position="296"/>
    </location>
</feature>
<feature type="compositionally biased region" description="Basic and acidic residues" evidence="2">
    <location>
        <begin position="297"/>
        <end position="316"/>
    </location>
</feature>
<feature type="compositionally biased region" description="Low complexity" evidence="2">
    <location>
        <begin position="318"/>
        <end position="334"/>
    </location>
</feature>
<feature type="compositionally biased region" description="Basic and acidic residues" evidence="2">
    <location>
        <begin position="335"/>
        <end position="371"/>
    </location>
</feature>
<feature type="compositionally biased region" description="Low complexity" evidence="2">
    <location>
        <begin position="454"/>
        <end position="471"/>
    </location>
</feature>
<feature type="compositionally biased region" description="Basic and acidic residues" evidence="2">
    <location>
        <begin position="472"/>
        <end position="488"/>
    </location>
</feature>
<feature type="compositionally biased region" description="Polar residues" evidence="2">
    <location>
        <begin position="564"/>
        <end position="574"/>
    </location>
</feature>
<feature type="compositionally biased region" description="Polar residues" evidence="2">
    <location>
        <begin position="644"/>
        <end position="664"/>
    </location>
</feature>
<feature type="compositionally biased region" description="Polar residues" evidence="2">
    <location>
        <begin position="752"/>
        <end position="774"/>
    </location>
</feature>
<feature type="compositionally biased region" description="Basic and acidic residues" evidence="2">
    <location>
        <begin position="785"/>
        <end position="798"/>
    </location>
</feature>
<feature type="compositionally biased region" description="Polar residues" evidence="2">
    <location>
        <begin position="818"/>
        <end position="828"/>
    </location>
</feature>
<feature type="compositionally biased region" description="Basic and acidic residues" evidence="2">
    <location>
        <begin position="831"/>
        <end position="842"/>
    </location>
</feature>
<feature type="compositionally biased region" description="Basic and acidic residues" evidence="2">
    <location>
        <begin position="920"/>
        <end position="948"/>
    </location>
</feature>
<feature type="compositionally biased region" description="Basic and acidic residues" evidence="2">
    <location>
        <begin position="981"/>
        <end position="992"/>
    </location>
</feature>
<gene>
    <name type="primary">RBMXL3</name>
</gene>
<dbReference type="EMBL" id="AACZ02218350">
    <property type="status" value="NOT_ANNOTATED_CDS"/>
    <property type="molecule type" value="Genomic_DNA"/>
</dbReference>
<dbReference type="EMBL" id="AACZ02218351">
    <property type="status" value="NOT_ANNOTATED_CDS"/>
    <property type="molecule type" value="Genomic_DNA"/>
</dbReference>
<dbReference type="STRING" id="9598.ENSPTRP00000047301"/>
<dbReference type="PaxDb" id="9598-ENSPTRP00000047301"/>
<dbReference type="eggNOG" id="KOG0118">
    <property type="taxonomic scope" value="Eukaryota"/>
</dbReference>
<dbReference type="InParanoid" id="P0C8Z4"/>
<dbReference type="Proteomes" id="UP000002277">
    <property type="component" value="Unplaced"/>
</dbReference>
<dbReference type="GO" id="GO:0003729">
    <property type="term" value="F:mRNA binding"/>
    <property type="evidence" value="ECO:0000318"/>
    <property type="project" value="GO_Central"/>
</dbReference>
<dbReference type="GO" id="GO:0017069">
    <property type="term" value="F:snRNA binding"/>
    <property type="evidence" value="ECO:0000318"/>
    <property type="project" value="GO_Central"/>
</dbReference>
<dbReference type="GO" id="GO:0000398">
    <property type="term" value="P:mRNA splicing, via spliceosome"/>
    <property type="evidence" value="ECO:0000318"/>
    <property type="project" value="GO_Central"/>
</dbReference>
<dbReference type="CDD" id="cd12382">
    <property type="entry name" value="RRM_RBMX_like"/>
    <property type="match status" value="1"/>
</dbReference>
<dbReference type="FunFam" id="3.30.70.330:FF:000119">
    <property type="entry name" value="RNA-binding motif protein, X chromosome"/>
    <property type="match status" value="1"/>
</dbReference>
<dbReference type="Gene3D" id="3.30.70.330">
    <property type="match status" value="1"/>
</dbReference>
<dbReference type="InterPro" id="IPR012677">
    <property type="entry name" value="Nucleotide-bd_a/b_plait_sf"/>
</dbReference>
<dbReference type="InterPro" id="IPR035979">
    <property type="entry name" value="RBD_domain_sf"/>
</dbReference>
<dbReference type="InterPro" id="IPR050441">
    <property type="entry name" value="RBM"/>
</dbReference>
<dbReference type="InterPro" id="IPR000504">
    <property type="entry name" value="RRM_dom"/>
</dbReference>
<dbReference type="InterPro" id="IPR003954">
    <property type="entry name" value="RRM_dom_euk"/>
</dbReference>
<dbReference type="PANTHER" id="PTHR48034">
    <property type="entry name" value="TRANSFORMER-2 SEX-DETERMINING PROTEIN-RELATED"/>
    <property type="match status" value="1"/>
</dbReference>
<dbReference type="Pfam" id="PF00076">
    <property type="entry name" value="RRM_1"/>
    <property type="match status" value="1"/>
</dbReference>
<dbReference type="SMART" id="SM00360">
    <property type="entry name" value="RRM"/>
    <property type="match status" value="1"/>
</dbReference>
<dbReference type="SMART" id="SM00361">
    <property type="entry name" value="RRM_1"/>
    <property type="match status" value="1"/>
</dbReference>
<dbReference type="SUPFAM" id="SSF54928">
    <property type="entry name" value="RNA-binding domain, RBD"/>
    <property type="match status" value="1"/>
</dbReference>
<dbReference type="PROSITE" id="PS50102">
    <property type="entry name" value="RRM"/>
    <property type="match status" value="1"/>
</dbReference>
<accession>P0C8Z4</accession>
<name>RMXL3_PANTR</name>
<proteinExistence type="predicted"/>
<reference key="1">
    <citation type="journal article" date="2005" name="Nature">
        <title>Initial sequence of the chimpanzee genome and comparison with the human genome.</title>
        <authorList>
            <consortium name="Chimpanzee sequencing and analysis consortium"/>
        </authorList>
    </citation>
    <scope>NUCLEOTIDE SEQUENCE [LARGE SCALE GENOMIC DNA]</scope>
</reference>